<accession>Q9RPT1</accession>
<comment type="function">
    <text>Required for the synthesis of the beta-hydroxy acid moiety of rhamnolipids.</text>
</comment>
<comment type="catalytic activity">
    <reaction>
        <text>a (3R)-hydroxyacyl-[ACP] + NADP(+) = a 3-oxoacyl-[ACP] + NADPH + H(+)</text>
        <dbReference type="Rhea" id="RHEA:17397"/>
        <dbReference type="Rhea" id="RHEA-COMP:9916"/>
        <dbReference type="Rhea" id="RHEA-COMP:9945"/>
        <dbReference type="ChEBI" id="CHEBI:15378"/>
        <dbReference type="ChEBI" id="CHEBI:57783"/>
        <dbReference type="ChEBI" id="CHEBI:58349"/>
        <dbReference type="ChEBI" id="CHEBI:78776"/>
        <dbReference type="ChEBI" id="CHEBI:78827"/>
        <dbReference type="EC" id="1.1.1.100"/>
    </reaction>
</comment>
<comment type="pathway">
    <text>Lipid metabolism; rhamnolipid biosynthesis.</text>
</comment>
<comment type="similarity">
    <text evidence="2">Belongs to the short-chain dehydrogenases/reductases (SDR) family.</text>
</comment>
<dbReference type="EC" id="1.1.1.100"/>
<dbReference type="EMBL" id="AF148964">
    <property type="protein sequence ID" value="AAD53514.1"/>
    <property type="molecule type" value="Genomic_DNA"/>
</dbReference>
<dbReference type="EMBL" id="AE004091">
    <property type="protein sequence ID" value="AAG06775.1"/>
    <property type="molecule type" value="Genomic_DNA"/>
</dbReference>
<dbReference type="PIR" id="F83221">
    <property type="entry name" value="F83221"/>
</dbReference>
<dbReference type="RefSeq" id="NP_252077.1">
    <property type="nucleotide sequence ID" value="NC_002516.2"/>
</dbReference>
<dbReference type="RefSeq" id="WP_003113116.1">
    <property type="nucleotide sequence ID" value="NZ_QZGE01000017.1"/>
</dbReference>
<dbReference type="PDB" id="2B4Q">
    <property type="method" value="X-ray"/>
    <property type="resolution" value="2.30 A"/>
    <property type="chains" value="A/B=1-256"/>
</dbReference>
<dbReference type="PDBsum" id="2B4Q"/>
<dbReference type="SMR" id="Q9RPT1"/>
<dbReference type="STRING" id="208964.PA3387"/>
<dbReference type="PaxDb" id="208964-PA3387"/>
<dbReference type="GeneID" id="880033"/>
<dbReference type="KEGG" id="pae:PA3387"/>
<dbReference type="PATRIC" id="fig|208964.12.peg.3546"/>
<dbReference type="PseudoCAP" id="PA3387"/>
<dbReference type="HOGENOM" id="CLU_010194_1_1_6"/>
<dbReference type="InParanoid" id="Q9RPT1"/>
<dbReference type="OrthoDB" id="286404at2"/>
<dbReference type="PhylomeDB" id="Q9RPT1"/>
<dbReference type="BioCyc" id="MetaCyc:MONOMER-15945"/>
<dbReference type="BioCyc" id="PAER208964:G1FZ6-3453-MONOMER"/>
<dbReference type="UniPathway" id="UPA00657"/>
<dbReference type="EvolutionaryTrace" id="Q9RPT1"/>
<dbReference type="Proteomes" id="UP000002438">
    <property type="component" value="Chromosome"/>
</dbReference>
<dbReference type="GO" id="GO:0005829">
    <property type="term" value="C:cytosol"/>
    <property type="evidence" value="ECO:0000318"/>
    <property type="project" value="GO_Central"/>
</dbReference>
<dbReference type="GO" id="GO:0004316">
    <property type="term" value="F:3-oxoacyl-[acyl-carrier-protein] reductase (NADPH) activity"/>
    <property type="evidence" value="ECO:0007669"/>
    <property type="project" value="UniProtKB-EC"/>
</dbReference>
<dbReference type="GO" id="GO:0008709">
    <property type="term" value="F:cholate 7-alpha-dehydrogenase (NAD+) activity"/>
    <property type="evidence" value="ECO:0000318"/>
    <property type="project" value="GO_Central"/>
</dbReference>
<dbReference type="CDD" id="cd08942">
    <property type="entry name" value="RhlG_SDR_c"/>
    <property type="match status" value="1"/>
</dbReference>
<dbReference type="FunFam" id="3.40.50.720:FF:000084">
    <property type="entry name" value="Short-chain dehydrogenase reductase"/>
    <property type="match status" value="1"/>
</dbReference>
<dbReference type="Gene3D" id="3.40.50.720">
    <property type="entry name" value="NAD(P)-binding Rossmann-like Domain"/>
    <property type="match status" value="1"/>
</dbReference>
<dbReference type="InterPro" id="IPR036291">
    <property type="entry name" value="NAD(P)-bd_dom_sf"/>
</dbReference>
<dbReference type="InterPro" id="IPR002347">
    <property type="entry name" value="SDR_fam"/>
</dbReference>
<dbReference type="InterPro" id="IPR052178">
    <property type="entry name" value="Sec_Metab_Biosynth_SDR"/>
</dbReference>
<dbReference type="PANTHER" id="PTHR43618">
    <property type="entry name" value="7-ALPHA-HYDROXYSTEROID DEHYDROGENASE"/>
    <property type="match status" value="1"/>
</dbReference>
<dbReference type="PANTHER" id="PTHR43618:SF8">
    <property type="entry name" value="7ALPHA-HYDROXYSTEROID DEHYDROGENASE"/>
    <property type="match status" value="1"/>
</dbReference>
<dbReference type="Pfam" id="PF13561">
    <property type="entry name" value="adh_short_C2"/>
    <property type="match status" value="1"/>
</dbReference>
<dbReference type="PRINTS" id="PR00081">
    <property type="entry name" value="GDHRDH"/>
</dbReference>
<dbReference type="PRINTS" id="PR00080">
    <property type="entry name" value="SDRFAMILY"/>
</dbReference>
<dbReference type="SUPFAM" id="SSF51735">
    <property type="entry name" value="NAD(P)-binding Rossmann-fold domains"/>
    <property type="match status" value="1"/>
</dbReference>
<feature type="chain" id="PRO_0000054755" description="Rhamnolipids biosynthesis 3-oxoacyl-[acyl-carrier-protein] reductase">
    <location>
        <begin position="1"/>
        <end position="256"/>
    </location>
</feature>
<feature type="active site" description="Proton acceptor" evidence="1">
    <location>
        <position position="162"/>
    </location>
</feature>
<feature type="binding site" evidence="1">
    <location>
        <begin position="14"/>
        <end position="38"/>
    </location>
    <ligand>
        <name>NADP(+)</name>
        <dbReference type="ChEBI" id="CHEBI:58349"/>
    </ligand>
</feature>
<feature type="binding site" evidence="1">
    <location>
        <position position="148"/>
    </location>
    <ligand>
        <name>substrate</name>
    </ligand>
</feature>
<feature type="turn" evidence="3">
    <location>
        <begin position="3"/>
        <end position="5"/>
    </location>
</feature>
<feature type="strand" evidence="3">
    <location>
        <begin position="11"/>
        <end position="15"/>
    </location>
</feature>
<feature type="turn" evidence="3">
    <location>
        <begin position="16"/>
        <end position="18"/>
    </location>
</feature>
<feature type="helix" evidence="3">
    <location>
        <begin position="20"/>
        <end position="31"/>
    </location>
</feature>
<feature type="strand" evidence="3">
    <location>
        <begin position="35"/>
        <end position="39"/>
    </location>
</feature>
<feature type="helix" evidence="3">
    <location>
        <begin position="43"/>
        <end position="53"/>
    </location>
</feature>
<feature type="strand" evidence="3">
    <location>
        <begin position="59"/>
        <end position="61"/>
    </location>
</feature>
<feature type="helix" evidence="3">
    <location>
        <begin position="69"/>
        <end position="82"/>
    </location>
</feature>
<feature type="strand" evidence="3">
    <location>
        <begin position="87"/>
        <end position="91"/>
    </location>
</feature>
<feature type="helix" evidence="3">
    <location>
        <begin position="107"/>
        <end position="116"/>
    </location>
</feature>
<feature type="helix" evidence="3">
    <location>
        <begin position="118"/>
        <end position="134"/>
    </location>
</feature>
<feature type="strand" evidence="3">
    <location>
        <begin position="137"/>
        <end position="139"/>
    </location>
</feature>
<feature type="strand" evidence="3">
    <location>
        <begin position="141"/>
        <end position="146"/>
    </location>
</feature>
<feature type="helix" evidence="3">
    <location>
        <begin position="149"/>
        <end position="151"/>
    </location>
</feature>
<feature type="helix" evidence="3">
    <location>
        <begin position="162"/>
        <end position="180"/>
    </location>
</feature>
<feature type="helix" evidence="3">
    <location>
        <begin position="181"/>
        <end position="183"/>
    </location>
</feature>
<feature type="strand" evidence="3">
    <location>
        <begin position="185"/>
        <end position="192"/>
    </location>
</feature>
<feature type="turn" evidence="3">
    <location>
        <begin position="198"/>
        <end position="200"/>
    </location>
</feature>
<feature type="helix" evidence="3">
    <location>
        <begin position="201"/>
        <end position="205"/>
    </location>
</feature>
<feature type="helix" evidence="3">
    <location>
        <begin position="207"/>
        <end position="215"/>
    </location>
</feature>
<feature type="helix" evidence="3">
    <location>
        <begin position="225"/>
        <end position="236"/>
    </location>
</feature>
<feature type="helix" evidence="3">
    <location>
        <begin position="238"/>
        <end position="240"/>
    </location>
</feature>
<feature type="strand" evidence="3">
    <location>
        <begin position="247"/>
        <end position="251"/>
    </location>
</feature>
<feature type="turn" evidence="3">
    <location>
        <begin position="252"/>
        <end position="255"/>
    </location>
</feature>
<reference key="1">
    <citation type="journal article" date="1998" name="J. Bacteriol.">
        <title>The Pseudomonas aeruginosa rhlG gene encodes an NADPH-dependent beta-ketoacyl reductase which is specifically involved in rhamnolipid synthesis.</title>
        <authorList>
            <person name="Campos-Garcia J."/>
            <person name="Caro A.D."/>
            <person name="Najera R."/>
            <person name="Miller-Maier R.M."/>
            <person name="Al-Tahhan R.A."/>
            <person name="Soberon-Chavez G."/>
        </authorList>
    </citation>
    <scope>NUCLEOTIDE SEQUENCE [GENOMIC DNA]</scope>
    <source>
        <strain>ATCC 15692 / DSM 22644 / CIP 104116 / JCM 14847 / LMG 12228 / 1C / PRS 101 / PAO1</strain>
    </source>
</reference>
<reference key="2">
    <citation type="journal article" date="2000" name="Nature">
        <title>Complete genome sequence of Pseudomonas aeruginosa PAO1, an opportunistic pathogen.</title>
        <authorList>
            <person name="Stover C.K."/>
            <person name="Pham X.-Q.T."/>
            <person name="Erwin A.L."/>
            <person name="Mizoguchi S.D."/>
            <person name="Warrener P."/>
            <person name="Hickey M.J."/>
            <person name="Brinkman F.S.L."/>
            <person name="Hufnagle W.O."/>
            <person name="Kowalik D.J."/>
            <person name="Lagrou M."/>
            <person name="Garber R.L."/>
            <person name="Goltry L."/>
            <person name="Tolentino E."/>
            <person name="Westbrock-Wadman S."/>
            <person name="Yuan Y."/>
            <person name="Brody L.L."/>
            <person name="Coulter S.N."/>
            <person name="Folger K.R."/>
            <person name="Kas A."/>
            <person name="Larbig K."/>
            <person name="Lim R.M."/>
            <person name="Smith K.A."/>
            <person name="Spencer D.H."/>
            <person name="Wong G.K.-S."/>
            <person name="Wu Z."/>
            <person name="Paulsen I.T."/>
            <person name="Reizer J."/>
            <person name="Saier M.H. Jr."/>
            <person name="Hancock R.E.W."/>
            <person name="Lory S."/>
            <person name="Olson M.V."/>
        </authorList>
    </citation>
    <scope>NUCLEOTIDE SEQUENCE [LARGE SCALE GENOMIC DNA]</scope>
    <source>
        <strain>ATCC 15692 / DSM 22644 / CIP 104116 / JCM 14847 / LMG 12228 / 1C / PRS 101 / PAO1</strain>
    </source>
</reference>
<protein>
    <recommendedName>
        <fullName>Rhamnolipids biosynthesis 3-oxoacyl-[acyl-carrier-protein] reductase</fullName>
        <ecNumber>1.1.1.100</ecNumber>
    </recommendedName>
    <alternativeName>
        <fullName>3-ketoacyl-acyl carrier protein reductase</fullName>
    </alternativeName>
</protein>
<gene>
    <name type="primary">rhlG</name>
    <name type="ordered locus">PA3387</name>
</gene>
<name>RHLG_PSEAE</name>
<proteinExistence type="evidence at protein level"/>
<organism>
    <name type="scientific">Pseudomonas aeruginosa (strain ATCC 15692 / DSM 22644 / CIP 104116 / JCM 14847 / LMG 12228 / 1C / PRS 101 / PAO1)</name>
    <dbReference type="NCBI Taxonomy" id="208964"/>
    <lineage>
        <taxon>Bacteria</taxon>
        <taxon>Pseudomonadati</taxon>
        <taxon>Pseudomonadota</taxon>
        <taxon>Gammaproteobacteria</taxon>
        <taxon>Pseudomonadales</taxon>
        <taxon>Pseudomonadaceae</taxon>
        <taxon>Pseudomonas</taxon>
    </lineage>
</organism>
<sequence length="256" mass="26831">MHPYFSLAGRIALVTGGSRGIGQMIAQGLLEAGARVFICARDAEACADTATRLSAYGDCQAIPADLSSEAGARRLAQALGELSARLDILVNNAGTSWGAALESYPVSGWEKVMQLNVTSVFSCIQQLLPLLRRSASAENPARVINIGSVAGISAMGEQAYAYGPSKAALHQLSRMLAKELVGEHINVNVIAPGRFPSRMTRHIANDPQALEADSASIPMGRWGRPEEMAALAISLAGTAGAYMTGNVIPIDGGFHL</sequence>
<evidence type="ECO:0000250" key="1"/>
<evidence type="ECO:0000305" key="2"/>
<evidence type="ECO:0007829" key="3">
    <source>
        <dbReference type="PDB" id="2B4Q"/>
    </source>
</evidence>
<keyword id="KW-0002">3D-structure</keyword>
<keyword id="KW-0521">NADP</keyword>
<keyword id="KW-0560">Oxidoreductase</keyword>
<keyword id="KW-1185">Reference proteome</keyword>